<keyword id="KW-0240">DNA-directed RNA polymerase</keyword>
<keyword id="KW-0460">Magnesium</keyword>
<keyword id="KW-0479">Metal-binding</keyword>
<keyword id="KW-0548">Nucleotidyltransferase</keyword>
<keyword id="KW-0804">Transcription</keyword>
<keyword id="KW-0808">Transferase</keyword>
<keyword id="KW-0862">Zinc</keyword>
<feature type="chain" id="PRO_0000353328" description="DNA-directed RNA polymerase subunit beta'">
    <location>
        <begin position="1"/>
        <end position="1177"/>
    </location>
</feature>
<feature type="binding site" evidence="1">
    <location>
        <position position="60"/>
    </location>
    <ligand>
        <name>Zn(2+)</name>
        <dbReference type="ChEBI" id="CHEBI:29105"/>
        <label>1</label>
    </ligand>
</feature>
<feature type="binding site" evidence="1">
    <location>
        <position position="62"/>
    </location>
    <ligand>
        <name>Zn(2+)</name>
        <dbReference type="ChEBI" id="CHEBI:29105"/>
        <label>1</label>
    </ligand>
</feature>
<feature type="binding site" evidence="1">
    <location>
        <position position="75"/>
    </location>
    <ligand>
        <name>Zn(2+)</name>
        <dbReference type="ChEBI" id="CHEBI:29105"/>
        <label>1</label>
    </ligand>
</feature>
<feature type="binding site" evidence="1">
    <location>
        <position position="78"/>
    </location>
    <ligand>
        <name>Zn(2+)</name>
        <dbReference type="ChEBI" id="CHEBI:29105"/>
        <label>1</label>
    </ligand>
</feature>
<feature type="binding site" evidence="1">
    <location>
        <position position="450"/>
    </location>
    <ligand>
        <name>Mg(2+)</name>
        <dbReference type="ChEBI" id="CHEBI:18420"/>
    </ligand>
</feature>
<feature type="binding site" evidence="1">
    <location>
        <position position="452"/>
    </location>
    <ligand>
        <name>Mg(2+)</name>
        <dbReference type="ChEBI" id="CHEBI:18420"/>
    </ligand>
</feature>
<feature type="binding site" evidence="1">
    <location>
        <position position="454"/>
    </location>
    <ligand>
        <name>Mg(2+)</name>
        <dbReference type="ChEBI" id="CHEBI:18420"/>
    </ligand>
</feature>
<feature type="binding site" evidence="1">
    <location>
        <position position="795"/>
    </location>
    <ligand>
        <name>Zn(2+)</name>
        <dbReference type="ChEBI" id="CHEBI:29105"/>
        <label>2</label>
    </ligand>
</feature>
<feature type="binding site" evidence="1">
    <location>
        <position position="869"/>
    </location>
    <ligand>
        <name>Zn(2+)</name>
        <dbReference type="ChEBI" id="CHEBI:29105"/>
        <label>2</label>
    </ligand>
</feature>
<feature type="binding site" evidence="1">
    <location>
        <position position="876"/>
    </location>
    <ligand>
        <name>Zn(2+)</name>
        <dbReference type="ChEBI" id="CHEBI:29105"/>
        <label>2</label>
    </ligand>
</feature>
<feature type="binding site" evidence="1">
    <location>
        <position position="879"/>
    </location>
    <ligand>
        <name>Zn(2+)</name>
        <dbReference type="ChEBI" id="CHEBI:29105"/>
        <label>2</label>
    </ligand>
</feature>
<sequence>MFELNNFDAIQIGLASPEQIREWSRGEVKKPETINYRTLKPEKDGLFCERIFGPMKDWECHCGKYKRVRYKGIVCDRCGVEVTKAKVRRERMGHIELAAPVSHIWYFKGIPSRMGLLMDMSPRALEKVLYFASYIVIDPKETPLLKKQLLNEKEYREAVDKYGDDSFVAGMGAEAIQELLGEIDLVAGAKELKEDLKQSTGQKRVRIIRRLEVVESFAKSGNDPKWMIINVIPVIPPDLRPMVQLDGGRFATSDLNDLYRRVINRNNRLKKLLDLGAPDIIVRNEKRMLQEAVDALIDNGRRGRPVTGPGNRPLKSLSDMLKGKQGRFRQNLLGKRVDYSGRSVIVVGPELKMYQCGLPKEMALELFKPFVMKKLVQDGVAHNIKSAKRMVERVLPQVWDVLEEVITDHPVLLNRAPTLHRLGIQAFQPVLVEGRAIKLHPLACTAYNADFDGDQMAVHVPLSVEAQAEARFLMLAAGNILKPSDGKPVCVPTQDMVLGSYYLTMDRTGAKGEGMTFSNKDEAVMAYESKYIDIHAQINVRVYKEIDGVLKSGIIKTTVGKLIFNESIPQDLGFVNREDEKEKFNLEIDFLVTKKSLGKVIDQSYMLHGPTKTSIMLDNIKALGYHYSSIGAVTVAASDMIVPPVKYDLLHEADETIDKIEKMYKRGFISEDERYERVIEKWTKTTEEVADALMDSLDKFNPIYMMADSGARGSKSQIKQLAGMRGLMASPSGKILELPIRASFREGLDVLEYFISTHGARKGNADTALKTADSGYLTRRLVDVCQDVIVREEDCGTDDGIYVSEIKEGSEVIEELKERLIGRYTAEDIVNPNSGDIIVAKNEYMDPVIADKVVSAGIKKVKIRSAFTCDCKVGVCAKCYGMNMATAKKIDIGEAVGIIAAQSIGEPGTQLTMRTFHTGGVAGSDITQGLPRVEELFEARKPKGLAIVSEIHGNVRIEETKKKRAVFVMGADGEECSYDIPFGSRLKVSDGDYIEAGDEITEGSVNPHDIMNIKGVDGARRYLLSEVQKVYRLQGVDINDKHLEVVVKQMTRKVKVLESGDTELLPGTMIDIFDFQGANAKVREFGGEEAKGEQSLLGITKAALATDSFLSAASFQETTRVLTEAAIKGKVDPLIGLKENVIIGKLIPAGTGMMRYRGLNLNTKNEKIEDNETEIVE</sequence>
<dbReference type="EC" id="2.7.7.6" evidence="1"/>
<dbReference type="EMBL" id="CP001078">
    <property type="protein sequence ID" value="ACD53574.1"/>
    <property type="molecule type" value="Genomic_DNA"/>
</dbReference>
<dbReference type="RefSeq" id="WP_003371558.1">
    <property type="nucleotide sequence ID" value="NC_010723.1"/>
</dbReference>
<dbReference type="SMR" id="B2UYA4"/>
<dbReference type="KEGG" id="cbt:CLH_0231"/>
<dbReference type="HOGENOM" id="CLU_000524_3_1_9"/>
<dbReference type="GO" id="GO:0000428">
    <property type="term" value="C:DNA-directed RNA polymerase complex"/>
    <property type="evidence" value="ECO:0007669"/>
    <property type="project" value="UniProtKB-KW"/>
</dbReference>
<dbReference type="GO" id="GO:0003677">
    <property type="term" value="F:DNA binding"/>
    <property type="evidence" value="ECO:0007669"/>
    <property type="project" value="UniProtKB-UniRule"/>
</dbReference>
<dbReference type="GO" id="GO:0003899">
    <property type="term" value="F:DNA-directed RNA polymerase activity"/>
    <property type="evidence" value="ECO:0007669"/>
    <property type="project" value="UniProtKB-UniRule"/>
</dbReference>
<dbReference type="GO" id="GO:0000287">
    <property type="term" value="F:magnesium ion binding"/>
    <property type="evidence" value="ECO:0007669"/>
    <property type="project" value="UniProtKB-UniRule"/>
</dbReference>
<dbReference type="GO" id="GO:0008270">
    <property type="term" value="F:zinc ion binding"/>
    <property type="evidence" value="ECO:0007669"/>
    <property type="project" value="UniProtKB-UniRule"/>
</dbReference>
<dbReference type="GO" id="GO:0006351">
    <property type="term" value="P:DNA-templated transcription"/>
    <property type="evidence" value="ECO:0007669"/>
    <property type="project" value="UniProtKB-UniRule"/>
</dbReference>
<dbReference type="CDD" id="cd02655">
    <property type="entry name" value="RNAP_beta'_C"/>
    <property type="match status" value="1"/>
</dbReference>
<dbReference type="CDD" id="cd01609">
    <property type="entry name" value="RNAP_beta'_N"/>
    <property type="match status" value="1"/>
</dbReference>
<dbReference type="FunFam" id="1.10.150.390:FF:000002">
    <property type="entry name" value="DNA-directed RNA polymerase subunit beta"/>
    <property type="match status" value="1"/>
</dbReference>
<dbReference type="FunFam" id="1.10.40.90:FF:000001">
    <property type="entry name" value="DNA-directed RNA polymerase subunit beta"/>
    <property type="match status" value="1"/>
</dbReference>
<dbReference type="FunFam" id="4.10.860.120:FF:000001">
    <property type="entry name" value="DNA-directed RNA polymerase subunit beta"/>
    <property type="match status" value="1"/>
</dbReference>
<dbReference type="Gene3D" id="1.10.132.30">
    <property type="match status" value="1"/>
</dbReference>
<dbReference type="Gene3D" id="1.10.150.390">
    <property type="match status" value="1"/>
</dbReference>
<dbReference type="Gene3D" id="1.10.1790.20">
    <property type="match status" value="1"/>
</dbReference>
<dbReference type="Gene3D" id="1.10.40.90">
    <property type="match status" value="1"/>
</dbReference>
<dbReference type="Gene3D" id="2.40.40.20">
    <property type="match status" value="1"/>
</dbReference>
<dbReference type="Gene3D" id="2.40.50.100">
    <property type="match status" value="1"/>
</dbReference>
<dbReference type="Gene3D" id="4.10.860.120">
    <property type="entry name" value="RNA polymerase II, clamp domain"/>
    <property type="match status" value="1"/>
</dbReference>
<dbReference type="Gene3D" id="1.10.274.100">
    <property type="entry name" value="RNA polymerase Rpb1, domain 3"/>
    <property type="match status" value="1"/>
</dbReference>
<dbReference type="HAMAP" id="MF_01322">
    <property type="entry name" value="RNApol_bact_RpoC"/>
    <property type="match status" value="1"/>
</dbReference>
<dbReference type="InterPro" id="IPR045867">
    <property type="entry name" value="DNA-dir_RpoC_beta_prime"/>
</dbReference>
<dbReference type="InterPro" id="IPR012754">
    <property type="entry name" value="DNA-dir_RpoC_beta_prime_bact"/>
</dbReference>
<dbReference type="InterPro" id="IPR000722">
    <property type="entry name" value="RNA_pol_asu"/>
</dbReference>
<dbReference type="InterPro" id="IPR006592">
    <property type="entry name" value="RNA_pol_N"/>
</dbReference>
<dbReference type="InterPro" id="IPR007080">
    <property type="entry name" value="RNA_pol_Rpb1_1"/>
</dbReference>
<dbReference type="InterPro" id="IPR007066">
    <property type="entry name" value="RNA_pol_Rpb1_3"/>
</dbReference>
<dbReference type="InterPro" id="IPR042102">
    <property type="entry name" value="RNA_pol_Rpb1_3_sf"/>
</dbReference>
<dbReference type="InterPro" id="IPR007083">
    <property type="entry name" value="RNA_pol_Rpb1_4"/>
</dbReference>
<dbReference type="InterPro" id="IPR007081">
    <property type="entry name" value="RNA_pol_Rpb1_5"/>
</dbReference>
<dbReference type="InterPro" id="IPR044893">
    <property type="entry name" value="RNA_pol_Rpb1_clamp_domain"/>
</dbReference>
<dbReference type="InterPro" id="IPR038120">
    <property type="entry name" value="Rpb1_funnel_sf"/>
</dbReference>
<dbReference type="NCBIfam" id="TIGR02386">
    <property type="entry name" value="rpoC_TIGR"/>
    <property type="match status" value="1"/>
</dbReference>
<dbReference type="PANTHER" id="PTHR19376">
    <property type="entry name" value="DNA-DIRECTED RNA POLYMERASE"/>
    <property type="match status" value="1"/>
</dbReference>
<dbReference type="PANTHER" id="PTHR19376:SF54">
    <property type="entry name" value="DNA-DIRECTED RNA POLYMERASE SUBUNIT BETA"/>
    <property type="match status" value="1"/>
</dbReference>
<dbReference type="Pfam" id="PF04997">
    <property type="entry name" value="RNA_pol_Rpb1_1"/>
    <property type="match status" value="1"/>
</dbReference>
<dbReference type="Pfam" id="PF00623">
    <property type="entry name" value="RNA_pol_Rpb1_2"/>
    <property type="match status" value="2"/>
</dbReference>
<dbReference type="Pfam" id="PF04983">
    <property type="entry name" value="RNA_pol_Rpb1_3"/>
    <property type="match status" value="1"/>
</dbReference>
<dbReference type="Pfam" id="PF05000">
    <property type="entry name" value="RNA_pol_Rpb1_4"/>
    <property type="match status" value="1"/>
</dbReference>
<dbReference type="Pfam" id="PF04998">
    <property type="entry name" value="RNA_pol_Rpb1_5"/>
    <property type="match status" value="1"/>
</dbReference>
<dbReference type="SMART" id="SM00663">
    <property type="entry name" value="RPOLA_N"/>
    <property type="match status" value="1"/>
</dbReference>
<dbReference type="SUPFAM" id="SSF64484">
    <property type="entry name" value="beta and beta-prime subunits of DNA dependent RNA-polymerase"/>
    <property type="match status" value="1"/>
</dbReference>
<organism>
    <name type="scientific">Clostridium botulinum (strain Alaska E43 / Type E3)</name>
    <dbReference type="NCBI Taxonomy" id="508767"/>
    <lineage>
        <taxon>Bacteria</taxon>
        <taxon>Bacillati</taxon>
        <taxon>Bacillota</taxon>
        <taxon>Clostridia</taxon>
        <taxon>Eubacteriales</taxon>
        <taxon>Clostridiaceae</taxon>
        <taxon>Clostridium</taxon>
    </lineage>
</organism>
<reference key="1">
    <citation type="submission" date="2008-05" db="EMBL/GenBank/DDBJ databases">
        <title>Complete genome sequence of Clostridium botulinum E3 str. Alaska E43.</title>
        <authorList>
            <person name="Brinkac L.M."/>
            <person name="Brown J.L."/>
            <person name="Bruce D."/>
            <person name="Detter C."/>
            <person name="Munk C."/>
            <person name="Smith L.A."/>
            <person name="Smith T.J."/>
            <person name="Sutton G."/>
            <person name="Brettin T.S."/>
        </authorList>
    </citation>
    <scope>NUCLEOTIDE SEQUENCE [LARGE SCALE GENOMIC DNA]</scope>
    <source>
        <strain>Alaska E43 / Type E3</strain>
    </source>
</reference>
<accession>B2UYA4</accession>
<evidence type="ECO:0000255" key="1">
    <source>
        <dbReference type="HAMAP-Rule" id="MF_01322"/>
    </source>
</evidence>
<proteinExistence type="inferred from homology"/>
<comment type="function">
    <text evidence="1">DNA-dependent RNA polymerase catalyzes the transcription of DNA into RNA using the four ribonucleoside triphosphates as substrates.</text>
</comment>
<comment type="catalytic activity">
    <reaction evidence="1">
        <text>RNA(n) + a ribonucleoside 5'-triphosphate = RNA(n+1) + diphosphate</text>
        <dbReference type="Rhea" id="RHEA:21248"/>
        <dbReference type="Rhea" id="RHEA-COMP:14527"/>
        <dbReference type="Rhea" id="RHEA-COMP:17342"/>
        <dbReference type="ChEBI" id="CHEBI:33019"/>
        <dbReference type="ChEBI" id="CHEBI:61557"/>
        <dbReference type="ChEBI" id="CHEBI:140395"/>
        <dbReference type="EC" id="2.7.7.6"/>
    </reaction>
</comment>
<comment type="cofactor">
    <cofactor evidence="1">
        <name>Mg(2+)</name>
        <dbReference type="ChEBI" id="CHEBI:18420"/>
    </cofactor>
    <text evidence="1">Binds 1 Mg(2+) ion per subunit.</text>
</comment>
<comment type="cofactor">
    <cofactor evidence="1">
        <name>Zn(2+)</name>
        <dbReference type="ChEBI" id="CHEBI:29105"/>
    </cofactor>
    <text evidence="1">Binds 2 Zn(2+) ions per subunit.</text>
</comment>
<comment type="subunit">
    <text evidence="1">The RNAP catalytic core consists of 2 alpha, 1 beta, 1 beta' and 1 omega subunit. When a sigma factor is associated with the core the holoenzyme is formed, which can initiate transcription.</text>
</comment>
<comment type="similarity">
    <text evidence="1">Belongs to the RNA polymerase beta' chain family.</text>
</comment>
<name>RPOC_CLOBA</name>
<protein>
    <recommendedName>
        <fullName evidence="1">DNA-directed RNA polymerase subunit beta'</fullName>
        <shortName evidence="1">RNAP subunit beta'</shortName>
        <ecNumber evidence="1">2.7.7.6</ecNumber>
    </recommendedName>
    <alternativeName>
        <fullName evidence="1">RNA polymerase subunit beta'</fullName>
    </alternativeName>
    <alternativeName>
        <fullName evidence="1">Transcriptase subunit beta'</fullName>
    </alternativeName>
</protein>
<gene>
    <name evidence="1" type="primary">rpoC</name>
    <name type="ordered locus">CLH_0231</name>
</gene>